<reference key="1">
    <citation type="journal article" date="2010" name="Genome Biol. Evol.">
        <title>Continuing evolution of Burkholderia mallei through genome reduction and large-scale rearrangements.</title>
        <authorList>
            <person name="Losada L."/>
            <person name="Ronning C.M."/>
            <person name="DeShazer D."/>
            <person name="Woods D."/>
            <person name="Fedorova N."/>
            <person name="Kim H.S."/>
            <person name="Shabalina S.A."/>
            <person name="Pearson T.R."/>
            <person name="Brinkac L."/>
            <person name="Tan P."/>
            <person name="Nandi T."/>
            <person name="Crabtree J."/>
            <person name="Badger J."/>
            <person name="Beckstrom-Sternberg S."/>
            <person name="Saqib M."/>
            <person name="Schutzer S.E."/>
            <person name="Keim P."/>
            <person name="Nierman W.C."/>
        </authorList>
    </citation>
    <scope>NUCLEOTIDE SEQUENCE [LARGE SCALE GENOMIC DNA]</scope>
    <source>
        <strain>SAVP1</strain>
    </source>
</reference>
<organism>
    <name type="scientific">Burkholderia mallei (strain SAVP1)</name>
    <dbReference type="NCBI Taxonomy" id="320388"/>
    <lineage>
        <taxon>Bacteria</taxon>
        <taxon>Pseudomonadati</taxon>
        <taxon>Pseudomonadota</taxon>
        <taxon>Betaproteobacteria</taxon>
        <taxon>Burkholderiales</taxon>
        <taxon>Burkholderiaceae</taxon>
        <taxon>Burkholderia</taxon>
        <taxon>pseudomallei group</taxon>
    </lineage>
</organism>
<feature type="chain" id="PRO_1000044367" description="Sec-independent protein translocase protein TatA">
    <location>
        <begin position="1"/>
        <end position="77"/>
    </location>
</feature>
<feature type="transmembrane region" description="Helical" evidence="1">
    <location>
        <begin position="1"/>
        <end position="21"/>
    </location>
</feature>
<feature type="region of interest" description="Disordered" evidence="2">
    <location>
        <begin position="43"/>
        <end position="77"/>
    </location>
</feature>
<feature type="compositionally biased region" description="Basic and acidic residues" evidence="2">
    <location>
        <begin position="64"/>
        <end position="77"/>
    </location>
</feature>
<sequence>MGGLSIWHWLIVLLIVALVFGTKKLRNIGNDLGSAVKGFKDGMKESEAPADAQQLPRSGSVNVDAKDAARSSDSNKA</sequence>
<dbReference type="EMBL" id="CP000526">
    <property type="protein sequence ID" value="ABM50587.1"/>
    <property type="molecule type" value="Genomic_DNA"/>
</dbReference>
<dbReference type="RefSeq" id="WP_004199902.1">
    <property type="nucleotide sequence ID" value="NC_008785.1"/>
</dbReference>
<dbReference type="SMR" id="A1V8I0"/>
<dbReference type="GeneID" id="93061745"/>
<dbReference type="KEGG" id="bmv:BMASAVP1_A3250"/>
<dbReference type="HOGENOM" id="CLU_086034_5_3_4"/>
<dbReference type="GO" id="GO:0033281">
    <property type="term" value="C:TAT protein transport complex"/>
    <property type="evidence" value="ECO:0007669"/>
    <property type="project" value="UniProtKB-UniRule"/>
</dbReference>
<dbReference type="GO" id="GO:0008320">
    <property type="term" value="F:protein transmembrane transporter activity"/>
    <property type="evidence" value="ECO:0007669"/>
    <property type="project" value="UniProtKB-UniRule"/>
</dbReference>
<dbReference type="GO" id="GO:0043953">
    <property type="term" value="P:protein transport by the Tat complex"/>
    <property type="evidence" value="ECO:0007669"/>
    <property type="project" value="UniProtKB-UniRule"/>
</dbReference>
<dbReference type="Gene3D" id="1.20.5.3310">
    <property type="match status" value="1"/>
</dbReference>
<dbReference type="HAMAP" id="MF_00236">
    <property type="entry name" value="TatA_E"/>
    <property type="match status" value="1"/>
</dbReference>
<dbReference type="InterPro" id="IPR003369">
    <property type="entry name" value="TatA/B/E"/>
</dbReference>
<dbReference type="InterPro" id="IPR006312">
    <property type="entry name" value="TatA/E"/>
</dbReference>
<dbReference type="NCBIfam" id="NF002813">
    <property type="entry name" value="PRK02958.1"/>
    <property type="match status" value="1"/>
</dbReference>
<dbReference type="NCBIfam" id="TIGR01411">
    <property type="entry name" value="tatAE"/>
    <property type="match status" value="1"/>
</dbReference>
<dbReference type="PANTHER" id="PTHR42982">
    <property type="entry name" value="SEC-INDEPENDENT PROTEIN TRANSLOCASE PROTEIN TATA"/>
    <property type="match status" value="1"/>
</dbReference>
<dbReference type="PANTHER" id="PTHR42982:SF1">
    <property type="entry name" value="SEC-INDEPENDENT PROTEIN TRANSLOCASE PROTEIN TATA"/>
    <property type="match status" value="1"/>
</dbReference>
<dbReference type="Pfam" id="PF02416">
    <property type="entry name" value="TatA_B_E"/>
    <property type="match status" value="1"/>
</dbReference>
<evidence type="ECO:0000255" key="1">
    <source>
        <dbReference type="HAMAP-Rule" id="MF_00236"/>
    </source>
</evidence>
<evidence type="ECO:0000256" key="2">
    <source>
        <dbReference type="SAM" id="MobiDB-lite"/>
    </source>
</evidence>
<protein>
    <recommendedName>
        <fullName evidence="1">Sec-independent protein translocase protein TatA</fullName>
    </recommendedName>
</protein>
<accession>A1V8I0</accession>
<name>TATA_BURMS</name>
<proteinExistence type="inferred from homology"/>
<gene>
    <name evidence="1" type="primary">tatA</name>
    <name type="ordered locus">BMASAVP1_A3250</name>
</gene>
<keyword id="KW-0997">Cell inner membrane</keyword>
<keyword id="KW-1003">Cell membrane</keyword>
<keyword id="KW-0472">Membrane</keyword>
<keyword id="KW-0653">Protein transport</keyword>
<keyword id="KW-0811">Translocation</keyword>
<keyword id="KW-0812">Transmembrane</keyword>
<keyword id="KW-1133">Transmembrane helix</keyword>
<keyword id="KW-0813">Transport</keyword>
<comment type="function">
    <text evidence="1">Part of the twin-arginine translocation (Tat) system that transports large folded proteins containing a characteristic twin-arginine motif in their signal peptide across membranes. TatA could form the protein-conducting channel of the Tat system.</text>
</comment>
<comment type="subunit">
    <text evidence="1">The Tat system comprises two distinct complexes: a TatABC complex, containing multiple copies of TatA, TatB and TatC subunits, and a separate TatA complex, containing only TatA subunits. Substrates initially bind to the TatABC complex, which probably triggers association of the separate TatA complex to form the active translocon.</text>
</comment>
<comment type="subcellular location">
    <subcellularLocation>
        <location evidence="1">Cell inner membrane</location>
        <topology evidence="1">Single-pass membrane protein</topology>
    </subcellularLocation>
</comment>
<comment type="similarity">
    <text evidence="1">Belongs to the TatA/E family.</text>
</comment>